<keyword id="KW-0687">Ribonucleoprotein</keyword>
<keyword id="KW-0689">Ribosomal protein</keyword>
<keyword id="KW-0694">RNA-binding</keyword>
<keyword id="KW-0699">rRNA-binding</keyword>
<sequence length="75" mass="8843">MARFFRRRKFCRFTAEGVQEIDYKDVATLKNYITEAGKIVPSRITGTSAKYQRQLARAIKRSRYLALLPYTDKHQ</sequence>
<comment type="function">
    <text evidence="1">Binds as a heterodimer with protein bS6 to the central domain of the 16S rRNA, where it helps stabilize the platform of the 30S subunit.</text>
</comment>
<comment type="subunit">
    <text evidence="1">Part of the 30S ribosomal subunit. Forms a tight heterodimer with protein bS6.</text>
</comment>
<comment type="similarity">
    <text evidence="1">Belongs to the bacterial ribosomal protein bS18 family.</text>
</comment>
<evidence type="ECO:0000255" key="1">
    <source>
        <dbReference type="HAMAP-Rule" id="MF_00270"/>
    </source>
</evidence>
<evidence type="ECO:0000305" key="2"/>
<reference key="1">
    <citation type="journal article" date="2003" name="Genome Res.">
        <title>Comparative genome analysis of Vibrio vulnificus, a marine pathogen.</title>
        <authorList>
            <person name="Chen C.-Y."/>
            <person name="Wu K.-M."/>
            <person name="Chang Y.-C."/>
            <person name="Chang C.-H."/>
            <person name="Tsai H.-C."/>
            <person name="Liao T.-L."/>
            <person name="Liu Y.-M."/>
            <person name="Chen H.-J."/>
            <person name="Shen A.B.-T."/>
            <person name="Li J.-C."/>
            <person name="Su T.-L."/>
            <person name="Shao C.-P."/>
            <person name="Lee C.-T."/>
            <person name="Hor L.-I."/>
            <person name="Tsai S.-F."/>
        </authorList>
    </citation>
    <scope>NUCLEOTIDE SEQUENCE [LARGE SCALE GENOMIC DNA]</scope>
    <source>
        <strain>YJ016</strain>
    </source>
</reference>
<gene>
    <name evidence="1" type="primary">rpsR</name>
    <name type="ordered locus">VV2982</name>
</gene>
<protein>
    <recommendedName>
        <fullName evidence="1">Small ribosomal subunit protein bS18</fullName>
    </recommendedName>
    <alternativeName>
        <fullName evidence="2">30S ribosomal protein S18</fullName>
    </alternativeName>
</protein>
<accession>Q7MH90</accession>
<organism>
    <name type="scientific">Vibrio vulnificus (strain YJ016)</name>
    <dbReference type="NCBI Taxonomy" id="196600"/>
    <lineage>
        <taxon>Bacteria</taxon>
        <taxon>Pseudomonadati</taxon>
        <taxon>Pseudomonadota</taxon>
        <taxon>Gammaproteobacteria</taxon>
        <taxon>Vibrionales</taxon>
        <taxon>Vibrionaceae</taxon>
        <taxon>Vibrio</taxon>
    </lineage>
</organism>
<name>RS18_VIBVY</name>
<proteinExistence type="inferred from homology"/>
<feature type="chain" id="PRO_0000111261" description="Small ribosomal subunit protein bS18">
    <location>
        <begin position="1"/>
        <end position="75"/>
    </location>
</feature>
<dbReference type="EMBL" id="BA000037">
    <property type="protein sequence ID" value="BAC95746.1"/>
    <property type="molecule type" value="Genomic_DNA"/>
</dbReference>
<dbReference type="RefSeq" id="WP_000090472.1">
    <property type="nucleotide sequence ID" value="NC_005139.1"/>
</dbReference>
<dbReference type="SMR" id="Q7MH90"/>
<dbReference type="STRING" id="672.VV93_v1c27110"/>
<dbReference type="GeneID" id="97173128"/>
<dbReference type="KEGG" id="vvy:VV2982"/>
<dbReference type="eggNOG" id="COG0238">
    <property type="taxonomic scope" value="Bacteria"/>
</dbReference>
<dbReference type="HOGENOM" id="CLU_148710_2_3_6"/>
<dbReference type="Proteomes" id="UP000002675">
    <property type="component" value="Chromosome I"/>
</dbReference>
<dbReference type="GO" id="GO:0022627">
    <property type="term" value="C:cytosolic small ribosomal subunit"/>
    <property type="evidence" value="ECO:0007669"/>
    <property type="project" value="TreeGrafter"/>
</dbReference>
<dbReference type="GO" id="GO:0070181">
    <property type="term" value="F:small ribosomal subunit rRNA binding"/>
    <property type="evidence" value="ECO:0007669"/>
    <property type="project" value="TreeGrafter"/>
</dbReference>
<dbReference type="GO" id="GO:0003735">
    <property type="term" value="F:structural constituent of ribosome"/>
    <property type="evidence" value="ECO:0007669"/>
    <property type="project" value="InterPro"/>
</dbReference>
<dbReference type="GO" id="GO:0006412">
    <property type="term" value="P:translation"/>
    <property type="evidence" value="ECO:0007669"/>
    <property type="project" value="UniProtKB-UniRule"/>
</dbReference>
<dbReference type="FunFam" id="4.10.640.10:FF:000001">
    <property type="entry name" value="30S ribosomal protein S18"/>
    <property type="match status" value="1"/>
</dbReference>
<dbReference type="Gene3D" id="4.10.640.10">
    <property type="entry name" value="Ribosomal protein S18"/>
    <property type="match status" value="1"/>
</dbReference>
<dbReference type="HAMAP" id="MF_00270">
    <property type="entry name" value="Ribosomal_bS18"/>
    <property type="match status" value="1"/>
</dbReference>
<dbReference type="InterPro" id="IPR001648">
    <property type="entry name" value="Ribosomal_bS18"/>
</dbReference>
<dbReference type="InterPro" id="IPR018275">
    <property type="entry name" value="Ribosomal_bS18_CS"/>
</dbReference>
<dbReference type="InterPro" id="IPR036870">
    <property type="entry name" value="Ribosomal_bS18_sf"/>
</dbReference>
<dbReference type="NCBIfam" id="TIGR00165">
    <property type="entry name" value="S18"/>
    <property type="match status" value="1"/>
</dbReference>
<dbReference type="PANTHER" id="PTHR13479">
    <property type="entry name" value="30S RIBOSOMAL PROTEIN S18"/>
    <property type="match status" value="1"/>
</dbReference>
<dbReference type="PANTHER" id="PTHR13479:SF40">
    <property type="entry name" value="SMALL RIBOSOMAL SUBUNIT PROTEIN BS18M"/>
    <property type="match status" value="1"/>
</dbReference>
<dbReference type="Pfam" id="PF01084">
    <property type="entry name" value="Ribosomal_S18"/>
    <property type="match status" value="1"/>
</dbReference>
<dbReference type="PRINTS" id="PR00974">
    <property type="entry name" value="RIBOSOMALS18"/>
</dbReference>
<dbReference type="SUPFAM" id="SSF46911">
    <property type="entry name" value="Ribosomal protein S18"/>
    <property type="match status" value="1"/>
</dbReference>
<dbReference type="PROSITE" id="PS00057">
    <property type="entry name" value="RIBOSOMAL_S18"/>
    <property type="match status" value="1"/>
</dbReference>